<comment type="function">
    <text evidence="1">Catalyzes the ATP-dependent phosphorylation of thiamine-monophosphate (TMP) to form thiamine-pyrophosphate (TPP), the active form of vitamin B1.</text>
</comment>
<comment type="catalytic activity">
    <reaction evidence="1">
        <text>thiamine phosphate + ATP = thiamine diphosphate + ADP</text>
        <dbReference type="Rhea" id="RHEA:15913"/>
        <dbReference type="ChEBI" id="CHEBI:30616"/>
        <dbReference type="ChEBI" id="CHEBI:37575"/>
        <dbReference type="ChEBI" id="CHEBI:58937"/>
        <dbReference type="ChEBI" id="CHEBI:456216"/>
        <dbReference type="EC" id="2.7.4.16"/>
    </reaction>
</comment>
<comment type="pathway">
    <text evidence="1">Cofactor biosynthesis; thiamine diphosphate biosynthesis; thiamine diphosphate from thiamine phosphate: step 1/1.</text>
</comment>
<comment type="miscellaneous">
    <text>Was identified as a high-confidence drug target.</text>
</comment>
<comment type="miscellaneous">
    <text evidence="1">Reaction mechanism of ThiL seems to utilize a direct, inline transfer of the gamma-phosphate of ATP to TMP rather than a phosphorylated enzyme intermediate.</text>
</comment>
<comment type="similarity">
    <text evidence="1">Belongs to the thiamine-monophosphate kinase family.</text>
</comment>
<evidence type="ECO:0000255" key="1">
    <source>
        <dbReference type="HAMAP-Rule" id="MF_02128"/>
    </source>
</evidence>
<dbReference type="EC" id="2.7.4.16" evidence="1"/>
<dbReference type="EMBL" id="AL123456">
    <property type="protein sequence ID" value="CCP45782.1"/>
    <property type="molecule type" value="Genomic_DNA"/>
</dbReference>
<dbReference type="PIR" id="F70672">
    <property type="entry name" value="F70672"/>
</dbReference>
<dbReference type="RefSeq" id="NP_217493.1">
    <property type="nucleotide sequence ID" value="NC_000962.3"/>
</dbReference>
<dbReference type="RefSeq" id="WP_003415034.1">
    <property type="nucleotide sequence ID" value="NZ_NVQJ01000015.1"/>
</dbReference>
<dbReference type="SMR" id="P9WG71"/>
<dbReference type="FunCoup" id="P9WG71">
    <property type="interactions" value="178"/>
</dbReference>
<dbReference type="STRING" id="83332.Rv2977c"/>
<dbReference type="PaxDb" id="83332-Rv2977c"/>
<dbReference type="DNASU" id="888342"/>
<dbReference type="GeneID" id="888342"/>
<dbReference type="KEGG" id="mtu:Rv2977c"/>
<dbReference type="KEGG" id="mtv:RVBD_2977c"/>
<dbReference type="TubercuList" id="Rv2977c"/>
<dbReference type="eggNOG" id="COG0611">
    <property type="taxonomic scope" value="Bacteria"/>
</dbReference>
<dbReference type="InParanoid" id="P9WG71"/>
<dbReference type="OrthoDB" id="9802811at2"/>
<dbReference type="PhylomeDB" id="P9WG71"/>
<dbReference type="UniPathway" id="UPA00060">
    <property type="reaction ID" value="UER00142"/>
</dbReference>
<dbReference type="Proteomes" id="UP000001584">
    <property type="component" value="Chromosome"/>
</dbReference>
<dbReference type="GO" id="GO:0005524">
    <property type="term" value="F:ATP binding"/>
    <property type="evidence" value="ECO:0007669"/>
    <property type="project" value="UniProtKB-UniRule"/>
</dbReference>
<dbReference type="GO" id="GO:0000287">
    <property type="term" value="F:magnesium ion binding"/>
    <property type="evidence" value="ECO:0007669"/>
    <property type="project" value="UniProtKB-UniRule"/>
</dbReference>
<dbReference type="GO" id="GO:0009030">
    <property type="term" value="F:thiamine-phosphate kinase activity"/>
    <property type="evidence" value="ECO:0000318"/>
    <property type="project" value="GO_Central"/>
</dbReference>
<dbReference type="GO" id="GO:0009228">
    <property type="term" value="P:thiamine biosynthetic process"/>
    <property type="evidence" value="ECO:0000318"/>
    <property type="project" value="GO_Central"/>
</dbReference>
<dbReference type="GO" id="GO:0009229">
    <property type="term" value="P:thiamine diphosphate biosynthetic process"/>
    <property type="evidence" value="ECO:0000318"/>
    <property type="project" value="GO_Central"/>
</dbReference>
<dbReference type="CDD" id="cd02194">
    <property type="entry name" value="ThiL"/>
    <property type="match status" value="1"/>
</dbReference>
<dbReference type="Gene3D" id="3.90.650.10">
    <property type="entry name" value="PurM-like C-terminal domain"/>
    <property type="match status" value="1"/>
</dbReference>
<dbReference type="Gene3D" id="3.30.1330.10">
    <property type="entry name" value="PurM-like, N-terminal domain"/>
    <property type="match status" value="1"/>
</dbReference>
<dbReference type="HAMAP" id="MF_02128">
    <property type="entry name" value="TMP_kinase"/>
    <property type="match status" value="1"/>
</dbReference>
<dbReference type="InterPro" id="IPR010918">
    <property type="entry name" value="PurM-like_C_dom"/>
</dbReference>
<dbReference type="InterPro" id="IPR036676">
    <property type="entry name" value="PurM-like_C_sf"/>
</dbReference>
<dbReference type="InterPro" id="IPR016188">
    <property type="entry name" value="PurM-like_N"/>
</dbReference>
<dbReference type="InterPro" id="IPR036921">
    <property type="entry name" value="PurM-like_N_sf"/>
</dbReference>
<dbReference type="InterPro" id="IPR006283">
    <property type="entry name" value="ThiL-like"/>
</dbReference>
<dbReference type="NCBIfam" id="NF004351">
    <property type="entry name" value="PRK05731.1-4"/>
    <property type="match status" value="1"/>
</dbReference>
<dbReference type="NCBIfam" id="TIGR01379">
    <property type="entry name" value="thiL"/>
    <property type="match status" value="1"/>
</dbReference>
<dbReference type="PANTHER" id="PTHR30270">
    <property type="entry name" value="THIAMINE-MONOPHOSPHATE KINASE"/>
    <property type="match status" value="1"/>
</dbReference>
<dbReference type="PANTHER" id="PTHR30270:SF0">
    <property type="entry name" value="THIAMINE-MONOPHOSPHATE KINASE"/>
    <property type="match status" value="1"/>
</dbReference>
<dbReference type="Pfam" id="PF00586">
    <property type="entry name" value="AIRS"/>
    <property type="match status" value="1"/>
</dbReference>
<dbReference type="Pfam" id="PF02769">
    <property type="entry name" value="AIRS_C"/>
    <property type="match status" value="1"/>
</dbReference>
<dbReference type="PIRSF" id="PIRSF005303">
    <property type="entry name" value="Thiam_monoph_kin"/>
    <property type="match status" value="1"/>
</dbReference>
<dbReference type="SUPFAM" id="SSF56042">
    <property type="entry name" value="PurM C-terminal domain-like"/>
    <property type="match status" value="1"/>
</dbReference>
<dbReference type="SUPFAM" id="SSF55326">
    <property type="entry name" value="PurM N-terminal domain-like"/>
    <property type="match status" value="1"/>
</dbReference>
<feature type="chain" id="PRO_0000415641" description="Thiamine-monophosphate kinase">
    <location>
        <begin position="1"/>
        <end position="333"/>
    </location>
</feature>
<feature type="binding site" evidence="1">
    <location>
        <position position="44"/>
    </location>
    <ligand>
        <name>Mg(2+)</name>
        <dbReference type="ChEBI" id="CHEBI:18420"/>
        <label>3</label>
    </ligand>
</feature>
<feature type="binding site" evidence="1">
    <location>
        <position position="44"/>
    </location>
    <ligand>
        <name>Mg(2+)</name>
        <dbReference type="ChEBI" id="CHEBI:18420"/>
        <label>4</label>
    </ligand>
</feature>
<feature type="binding site" evidence="1">
    <location>
        <position position="58"/>
    </location>
    <ligand>
        <name>Mg(2+)</name>
        <dbReference type="ChEBI" id="CHEBI:18420"/>
        <label>4</label>
    </ligand>
</feature>
<feature type="binding site" evidence="1">
    <location>
        <position position="59"/>
    </location>
    <ligand>
        <name>Mg(2+)</name>
        <dbReference type="ChEBI" id="CHEBI:18420"/>
        <label>1</label>
    </ligand>
</feature>
<feature type="binding site" evidence="1">
    <location>
        <position position="60"/>
    </location>
    <ligand>
        <name>Mg(2+)</name>
        <dbReference type="ChEBI" id="CHEBI:18420"/>
        <label>1</label>
    </ligand>
</feature>
<feature type="binding site" evidence="1">
    <location>
        <position position="60"/>
    </location>
    <ligand>
        <name>Mg(2+)</name>
        <dbReference type="ChEBI" id="CHEBI:18420"/>
        <label>2</label>
    </ligand>
</feature>
<feature type="binding site" evidence="1">
    <location>
        <position position="67"/>
    </location>
    <ligand>
        <name>substrate</name>
    </ligand>
</feature>
<feature type="binding site" evidence="1">
    <location>
        <position position="89"/>
    </location>
    <ligand>
        <name>Mg(2+)</name>
        <dbReference type="ChEBI" id="CHEBI:18420"/>
        <label>2</label>
    </ligand>
</feature>
<feature type="binding site" evidence="1">
    <location>
        <position position="89"/>
    </location>
    <ligand>
        <name>Mg(2+)</name>
        <dbReference type="ChEBI" id="CHEBI:18420"/>
        <label>3</label>
    </ligand>
</feature>
<feature type="binding site" evidence="1">
    <location>
        <position position="89"/>
    </location>
    <ligand>
        <name>Mg(2+)</name>
        <dbReference type="ChEBI" id="CHEBI:18420"/>
        <label>4</label>
    </ligand>
</feature>
<feature type="binding site" evidence="1">
    <location>
        <begin position="136"/>
        <end position="137"/>
    </location>
    <ligand>
        <name>ATP</name>
        <dbReference type="ChEBI" id="CHEBI:30616"/>
    </ligand>
</feature>
<feature type="binding site" evidence="1">
    <location>
        <position position="137"/>
    </location>
    <ligand>
        <name>Mg(2+)</name>
        <dbReference type="ChEBI" id="CHEBI:18420"/>
        <label>1</label>
    </ligand>
</feature>
<feature type="binding site" evidence="1">
    <location>
        <position position="162"/>
    </location>
    <ligand>
        <name>ATP</name>
        <dbReference type="ChEBI" id="CHEBI:30616"/>
    </ligand>
</feature>
<feature type="binding site" evidence="1">
    <location>
        <position position="224"/>
    </location>
    <ligand>
        <name>Mg(2+)</name>
        <dbReference type="ChEBI" id="CHEBI:18420"/>
        <label>3</label>
    </ligand>
</feature>
<feature type="binding site" evidence="1">
    <location>
        <position position="226"/>
    </location>
    <ligand>
        <name>ATP</name>
        <dbReference type="ChEBI" id="CHEBI:30616"/>
    </ligand>
</feature>
<feature type="binding site" evidence="1">
    <location>
        <position position="227"/>
    </location>
    <ligand>
        <name>Mg(2+)</name>
        <dbReference type="ChEBI" id="CHEBI:18420"/>
        <label>5</label>
    </ligand>
</feature>
<feature type="binding site" evidence="1">
    <location>
        <position position="278"/>
    </location>
    <ligand>
        <name>substrate</name>
    </ligand>
</feature>
<feature type="binding site" evidence="1">
    <location>
        <position position="320"/>
    </location>
    <ligand>
        <name>substrate</name>
    </ligand>
</feature>
<reference key="1">
    <citation type="journal article" date="1998" name="Nature">
        <title>Deciphering the biology of Mycobacterium tuberculosis from the complete genome sequence.</title>
        <authorList>
            <person name="Cole S.T."/>
            <person name="Brosch R."/>
            <person name="Parkhill J."/>
            <person name="Garnier T."/>
            <person name="Churcher C.M."/>
            <person name="Harris D.E."/>
            <person name="Gordon S.V."/>
            <person name="Eiglmeier K."/>
            <person name="Gas S."/>
            <person name="Barry C.E. III"/>
            <person name="Tekaia F."/>
            <person name="Badcock K."/>
            <person name="Basham D."/>
            <person name="Brown D."/>
            <person name="Chillingworth T."/>
            <person name="Connor R."/>
            <person name="Davies R.M."/>
            <person name="Devlin K."/>
            <person name="Feltwell T."/>
            <person name="Gentles S."/>
            <person name="Hamlin N."/>
            <person name="Holroyd S."/>
            <person name="Hornsby T."/>
            <person name="Jagels K."/>
            <person name="Krogh A."/>
            <person name="McLean J."/>
            <person name="Moule S."/>
            <person name="Murphy L.D."/>
            <person name="Oliver S."/>
            <person name="Osborne J."/>
            <person name="Quail M.A."/>
            <person name="Rajandream M.A."/>
            <person name="Rogers J."/>
            <person name="Rutter S."/>
            <person name="Seeger K."/>
            <person name="Skelton S."/>
            <person name="Squares S."/>
            <person name="Squares R."/>
            <person name="Sulston J.E."/>
            <person name="Taylor K."/>
            <person name="Whitehead S."/>
            <person name="Barrell B.G."/>
        </authorList>
    </citation>
    <scope>NUCLEOTIDE SEQUENCE [LARGE SCALE GENOMIC DNA]</scope>
    <source>
        <strain>ATCC 25618 / H37Rv</strain>
    </source>
</reference>
<reference key="2">
    <citation type="journal article" date="2008" name="BMC Syst. Biol.">
        <title>targetTB: a target identification pipeline for Mycobacterium tuberculosis through an interactome, reactome and genome-scale structural analysis.</title>
        <authorList>
            <person name="Raman K."/>
            <person name="Yeturu K."/>
            <person name="Chandra N."/>
        </authorList>
    </citation>
    <scope>IDENTIFICATION AS A DRUG TARGET [LARGE SCALE ANALYSIS]</scope>
</reference>
<reference key="3">
    <citation type="journal article" date="2011" name="Mol. Cell. Proteomics">
        <title>Proteogenomic analysis of Mycobacterium tuberculosis by high resolution mass spectrometry.</title>
        <authorList>
            <person name="Kelkar D.S."/>
            <person name="Kumar D."/>
            <person name="Kumar P."/>
            <person name="Balakrishnan L."/>
            <person name="Muthusamy B."/>
            <person name="Yadav A.K."/>
            <person name="Shrivastava P."/>
            <person name="Marimuthu A."/>
            <person name="Anand S."/>
            <person name="Sundaram H."/>
            <person name="Kingsbury R."/>
            <person name="Harsha H.C."/>
            <person name="Nair B."/>
            <person name="Prasad T.S."/>
            <person name="Chauhan D.S."/>
            <person name="Katoch K."/>
            <person name="Katoch V.M."/>
            <person name="Kumar P."/>
            <person name="Chaerkady R."/>
            <person name="Ramachandran S."/>
            <person name="Dash D."/>
            <person name="Pandey A."/>
        </authorList>
    </citation>
    <scope>IDENTIFICATION BY MASS SPECTROMETRY [LARGE SCALE ANALYSIS]</scope>
    <source>
        <strain>ATCC 25618 / H37Rv</strain>
    </source>
</reference>
<accession>P9WG71</accession>
<accession>L0TE44</accession>
<accession>P95118</accession>
<accession>Q7D6B7</accession>
<name>THIL_MYCTU</name>
<proteinExistence type="evidence at protein level"/>
<protein>
    <recommendedName>
        <fullName evidence="1">Thiamine-monophosphate kinase</fullName>
        <shortName evidence="1">TMP kinase</shortName>
        <shortName evidence="1">Thiamine-phosphate kinase</shortName>
        <ecNumber evidence="1">2.7.4.16</ecNumber>
    </recommendedName>
</protein>
<sequence>MTTKDHSLATESPTLQQLGEFAVIDRLVRGRRQPATVLLGPGDDAALVSAGDGRTVVSTDMLVQDSHFRLDWSTPQDVGRKAIAQNAADIEAMGARATAFVVGFGAPAETPAAQASALVDGMWEEAGRIGAGIVGGDLVSCRQWVVSVTAIGDLDGRAPVLRSGAKAGSVLAVVGELGRSAAGYALWCNGIEDFAELRRRHLVPQPPYGHGAAAAAVGAQAMIDVSDGLLADLRHIAEASGVRIDLSAAALAADRDALTAAATALGTDPWPWVLSGGEDHALVACFVGPVPAGWRTIGRVLDGPARVLVDGEEWTGYAGWQSFGEPDNQGSLG</sequence>
<gene>
    <name evidence="1" type="primary">thiL</name>
    <name type="ordered locus">Rv2977c</name>
</gene>
<keyword id="KW-0067">ATP-binding</keyword>
<keyword id="KW-0418">Kinase</keyword>
<keyword id="KW-0460">Magnesium</keyword>
<keyword id="KW-0479">Metal-binding</keyword>
<keyword id="KW-0547">Nucleotide-binding</keyword>
<keyword id="KW-1185">Reference proteome</keyword>
<keyword id="KW-0784">Thiamine biosynthesis</keyword>
<keyword id="KW-0808">Transferase</keyword>
<organism>
    <name type="scientific">Mycobacterium tuberculosis (strain ATCC 25618 / H37Rv)</name>
    <dbReference type="NCBI Taxonomy" id="83332"/>
    <lineage>
        <taxon>Bacteria</taxon>
        <taxon>Bacillati</taxon>
        <taxon>Actinomycetota</taxon>
        <taxon>Actinomycetes</taxon>
        <taxon>Mycobacteriales</taxon>
        <taxon>Mycobacteriaceae</taxon>
        <taxon>Mycobacterium</taxon>
        <taxon>Mycobacterium tuberculosis complex</taxon>
    </lineage>
</organism>